<name>TFIIS_ASFB7</name>
<dbReference type="EMBL" id="M77121">
    <property type="protein sequence ID" value="AAA42700.1"/>
    <property type="molecule type" value="Genomic_DNA"/>
</dbReference>
<dbReference type="EMBL" id="U18466">
    <property type="protein sequence ID" value="AAA65367.1"/>
    <property type="molecule type" value="Genomic_DNA"/>
</dbReference>
<dbReference type="PIR" id="B39448">
    <property type="entry name" value="WMXFB2"/>
</dbReference>
<dbReference type="RefSeq" id="NP_042831.1">
    <property type="nucleotide sequence ID" value="NC_001659.2"/>
</dbReference>
<dbReference type="SMR" id="P27948"/>
<dbReference type="GeneID" id="22220367"/>
<dbReference type="KEGG" id="vg:22220367"/>
<dbReference type="Proteomes" id="UP000000624">
    <property type="component" value="Segment"/>
</dbReference>
<dbReference type="GO" id="GO:0003676">
    <property type="term" value="F:nucleic acid binding"/>
    <property type="evidence" value="ECO:0007669"/>
    <property type="project" value="InterPro"/>
</dbReference>
<dbReference type="GO" id="GO:0008270">
    <property type="term" value="F:zinc ion binding"/>
    <property type="evidence" value="ECO:0007669"/>
    <property type="project" value="UniProtKB-KW"/>
</dbReference>
<dbReference type="GO" id="GO:0006351">
    <property type="term" value="P:DNA-templated transcription"/>
    <property type="evidence" value="ECO:0007669"/>
    <property type="project" value="InterPro"/>
</dbReference>
<dbReference type="Gene3D" id="2.20.25.10">
    <property type="match status" value="1"/>
</dbReference>
<dbReference type="InterPro" id="IPR035100">
    <property type="entry name" value="TF_IIS-typ"/>
</dbReference>
<dbReference type="InterPro" id="IPR003618">
    <property type="entry name" value="TFIIS_cen_dom"/>
</dbReference>
<dbReference type="InterPro" id="IPR001222">
    <property type="entry name" value="Znf_TFIIS"/>
</dbReference>
<dbReference type="Pfam" id="PF01096">
    <property type="entry name" value="Zn_ribbon_TFIIS"/>
    <property type="match status" value="1"/>
</dbReference>
<dbReference type="PIRSF" id="PIRSF006704">
    <property type="entry name" value="TF_IIS"/>
    <property type="match status" value="1"/>
</dbReference>
<dbReference type="SMART" id="SM00510">
    <property type="entry name" value="TFS2M"/>
    <property type="match status" value="1"/>
</dbReference>
<dbReference type="SMART" id="SM00440">
    <property type="entry name" value="ZnF_C2C2"/>
    <property type="match status" value="1"/>
</dbReference>
<dbReference type="SUPFAM" id="SSF57783">
    <property type="entry name" value="Zinc beta-ribbon"/>
    <property type="match status" value="1"/>
</dbReference>
<dbReference type="PROSITE" id="PS51321">
    <property type="entry name" value="TFIIS_CENTRAL"/>
    <property type="match status" value="1"/>
</dbReference>
<dbReference type="PROSITE" id="PS00466">
    <property type="entry name" value="ZF_TFIIS_1"/>
    <property type="match status" value="1"/>
</dbReference>
<dbReference type="PROSITE" id="PS51133">
    <property type="entry name" value="ZF_TFIIS_2"/>
    <property type="match status" value="1"/>
</dbReference>
<organism>
    <name type="scientific">African swine fever virus (strain Badajoz 1971 Vero-adapted)</name>
    <name type="common">Ba71V</name>
    <name type="synonym">ASFV</name>
    <dbReference type="NCBI Taxonomy" id="10498"/>
    <lineage>
        <taxon>Viruses</taxon>
        <taxon>Varidnaviria</taxon>
        <taxon>Bamfordvirae</taxon>
        <taxon>Nucleocytoviricota</taxon>
        <taxon>Pokkesviricetes</taxon>
        <taxon>Asfuvirales</taxon>
        <taxon>Asfarviridae</taxon>
        <taxon>Asfivirus</taxon>
        <taxon>African swine fever virus</taxon>
    </lineage>
</organism>
<keyword id="KW-0024">Alternative initiation</keyword>
<keyword id="KW-0244">Early protein</keyword>
<keyword id="KW-0426">Late protein</keyword>
<keyword id="KW-0479">Metal-binding</keyword>
<keyword id="KW-1185">Reference proteome</keyword>
<keyword id="KW-0804">Transcription</keyword>
<keyword id="KW-0805">Transcription regulation</keyword>
<keyword id="KW-0862">Zinc</keyword>
<keyword id="KW-0863">Zinc-finger</keyword>
<protein>
    <recommendedName>
        <fullName evidence="5">Transcription factor TFIIS homolog</fullName>
    </recommendedName>
</protein>
<proteinExistence type="evidence at transcript level"/>
<feature type="chain" id="PRO_0000121454" description="Transcription factor TFIIS homolog">
    <location>
        <begin position="1"/>
        <end position="243"/>
    </location>
</feature>
<feature type="domain" description="TFIIS central" evidence="3">
    <location>
        <begin position="77"/>
        <end position="201"/>
    </location>
</feature>
<feature type="zinc finger region" description="TFIIS-type" evidence="2">
    <location>
        <begin position="202"/>
        <end position="242"/>
    </location>
</feature>
<feature type="binding site" evidence="2">
    <location>
        <position position="206"/>
    </location>
    <ligand>
        <name>Zn(2+)</name>
        <dbReference type="ChEBI" id="CHEBI:29105"/>
    </ligand>
</feature>
<feature type="binding site" evidence="2">
    <location>
        <position position="209"/>
    </location>
    <ligand>
        <name>Zn(2+)</name>
        <dbReference type="ChEBI" id="CHEBI:29105"/>
    </ligand>
</feature>
<feature type="binding site" evidence="2">
    <location>
        <position position="234"/>
    </location>
    <ligand>
        <name>Zn(2+)</name>
        <dbReference type="ChEBI" id="CHEBI:29105"/>
    </ligand>
</feature>
<feature type="binding site" evidence="2">
    <location>
        <position position="237"/>
    </location>
    <ligand>
        <name>Zn(2+)</name>
        <dbReference type="ChEBI" id="CHEBI:29105"/>
    </ligand>
</feature>
<feature type="splice variant" id="VSP_061336" description="In isoform 3." evidence="4">
    <location>
        <begin position="1"/>
        <end position="52"/>
    </location>
</feature>
<feature type="splice variant" id="VSP_061337" description="In isoform 2." evidence="4">
    <location>
        <begin position="1"/>
        <end position="2"/>
    </location>
</feature>
<gene>
    <name type="ordered locus">BA71V-140</name>
    <name type="ORF">I243L</name>
</gene>
<evidence type="ECO:0000250" key="1">
    <source>
        <dbReference type="UniProtKB" id="P07273"/>
    </source>
</evidence>
<evidence type="ECO:0000255" key="2">
    <source>
        <dbReference type="PROSITE-ProRule" id="PRU00472"/>
    </source>
</evidence>
<evidence type="ECO:0000255" key="3">
    <source>
        <dbReference type="PROSITE-ProRule" id="PRU00651"/>
    </source>
</evidence>
<evidence type="ECO:0000269" key="4">
    <source>
    </source>
</evidence>
<evidence type="ECO:0000303" key="5">
    <source>
    </source>
</evidence>
<evidence type="ECO:0000305" key="6"/>
<comment type="function">
    <text evidence="1">Putative initiation factor. Necessary for efficient transcription elongation past template-encoded arresting sites.</text>
</comment>
<comment type="alternative products">
    <event type="alternative initiation"/>
    <isoform>
        <id>P27948-1</id>
        <name>1</name>
        <sequence type="displayed"/>
    </isoform>
    <isoform>
        <id>P27948-2</id>
        <name>2</name>
        <sequence type="described" ref="VSP_061337"/>
    </isoform>
    <isoform>
        <id>P27948-3</id>
        <name>3</name>
        <sequence type="described" ref="VSP_061336"/>
    </isoform>
    <text evidence="4">Isoform 1 contains the N-terminal region that is probably responsible for the initiation function (PubMed:32075923).</text>
</comment>
<comment type="induction">
    <molecule>Isoform 1</molecule>
    <text evidence="4">Expressed in the intermediate phase of the viral replicative cycle.</text>
</comment>
<comment type="induction">
    <molecule>Isoform 2</molecule>
    <text evidence="4">Expressed in the early phase of the viral replicative cycle.</text>
</comment>
<comment type="induction">
    <molecule>Isoform 3</molecule>
    <text evidence="4">Expressed in the late phase of the viral replicative cycle.</text>
</comment>
<comment type="similarity">
    <text evidence="6">Belongs to the TFS-II family.</text>
</comment>
<reference key="1">
    <citation type="journal article" date="1992" name="Virology">
        <title>Genes homologous to ubiquitin-conjugating proteins and eukaryotic transcription factor SII in African swine fever virus.</title>
        <authorList>
            <person name="Rodriguez J.M."/>
            <person name="Salas M.L."/>
            <person name="Vinuela E."/>
        </authorList>
    </citation>
    <scope>NUCLEOTIDE SEQUENCE [GENOMIC DNA]</scope>
    <scope>FUNCTION</scope>
</reference>
<reference key="2">
    <citation type="journal article" date="1995" name="Virology">
        <title>Analysis of the complete nucleotide sequence of African swine fever virus.</title>
        <authorList>
            <person name="Yanez R.J."/>
            <person name="Rodriguez J.M."/>
            <person name="Nogal M.L."/>
            <person name="Yuste L."/>
            <person name="Enriquez C."/>
            <person name="Rodriguez J.F."/>
            <person name="Vinuela E."/>
        </authorList>
    </citation>
    <scope>NUCLEOTIDE SEQUENCE [LARGE SCALE GENOMIC DNA]</scope>
</reference>
<reference key="3">
    <citation type="journal article" date="2013" name="Virus Res.">
        <title>African swine fever virus transcription.</title>
        <authorList>
            <person name="Rodriguez J.M."/>
            <person name="Salas M.L."/>
        </authorList>
    </citation>
    <scope>REVIEW</scope>
</reference>
<reference key="4">
    <citation type="journal article" date="2020" name="Biochem. Soc. Trans.">
        <title>Transcriptome view of a killer: African swine fever virus.</title>
        <authorList>
            <person name="Cackett G."/>
            <person name="Sykora M."/>
            <person name="Werner F."/>
        </authorList>
    </citation>
    <scope>REVIEW</scope>
</reference>
<reference key="5">
    <citation type="journal article" date="2020" name="J. Virol.">
        <title>The African Swine Fever Virus Transcriptome.</title>
        <authorList>
            <person name="Cackett G."/>
            <person name="Matelska D."/>
            <person name="Sykora M."/>
            <person name="Portugal R."/>
            <person name="Malecki M."/>
            <person name="Baehler J."/>
            <person name="Dixon L."/>
            <person name="Werner F."/>
        </authorList>
    </citation>
    <scope>ALTERNATIVE INITIATION</scope>
</reference>
<sequence>MKMHIARDSIVFLLNKHLQNTILTNKIEQECFLQADTPKKYLQYIKPFLINCMTKNITTDLVMKDSKRLEPYIILEMRDIIQMMFFRTLQKHMFFKEHTDLCTEYAQKIEASCYHYTYQQQEKTFLEEYSTRCGTINHIINCEKKSHQQQDNDALNKLISGELKPEAIGSMTFAELCPSAALKEKTEITLRSQQKVAEKTSQLYKCPNCKQRMCTYREVQTRALDEPSTIFCTCKKCGHEFIG</sequence>
<organismHost>
    <name type="scientific">Ornithodoros</name>
    <name type="common">relapsing fever ticks</name>
    <dbReference type="NCBI Taxonomy" id="6937"/>
</organismHost>
<organismHost>
    <name type="scientific">Sus scrofa</name>
    <name type="common">Pig</name>
    <dbReference type="NCBI Taxonomy" id="9823"/>
</organismHost>
<accession>P27948</accession>